<organism>
    <name type="scientific">Arabidopsis thaliana</name>
    <name type="common">Mouse-ear cress</name>
    <dbReference type="NCBI Taxonomy" id="3702"/>
    <lineage>
        <taxon>Eukaryota</taxon>
        <taxon>Viridiplantae</taxon>
        <taxon>Streptophyta</taxon>
        <taxon>Embryophyta</taxon>
        <taxon>Tracheophyta</taxon>
        <taxon>Spermatophyta</taxon>
        <taxon>Magnoliopsida</taxon>
        <taxon>eudicotyledons</taxon>
        <taxon>Gunneridae</taxon>
        <taxon>Pentapetalae</taxon>
        <taxon>rosids</taxon>
        <taxon>malvids</taxon>
        <taxon>Brassicales</taxon>
        <taxon>Brassicaceae</taxon>
        <taxon>Camelineae</taxon>
        <taxon>Arabidopsis</taxon>
    </lineage>
</organism>
<sequence length="366" mass="40788">MVKGTNAEQALAREEASSSRPKRQRVPSIVEEEGENGGGDVVVRSGTLFELDLLDCPICCNALTIPIFQCDKGHIACSSCCTNVSNKCPYCSLAIGNYRSRIMERVVEAFIVRCPIVAGEASSSRQKRLRVPSIDEENGENGGRDVVVPSGTLSQLDLLDCPVCSKALKISIFQQSLFLAKRQNGCTETFSYGNELVHEKKCSFALCYCPAPNCNYAGVYKDLYSHYAANHKKLWTRFSCGYSMHVCMDFESKSLVLQQYSDGPLVVLQCFKEPPQGLFWTVNCIAPSAPGVGKFSYELSYSTAGNTLTFRSSEMNRIQKVSFQTPEKDFMFIPEYILCPMGLYKGTYICIRSLEEEEEEEEDNED</sequence>
<gene>
    <name type="ordered locus">At1g66610</name>
    <name type="ORF">T12I7.6</name>
</gene>
<keyword id="KW-0025">Alternative splicing</keyword>
<keyword id="KW-0479">Metal-binding</keyword>
<keyword id="KW-1185">Reference proteome</keyword>
<keyword id="KW-0808">Transferase</keyword>
<keyword id="KW-0833">Ubl conjugation pathway</keyword>
<keyword id="KW-0862">Zinc</keyword>
<keyword id="KW-0863">Zinc-finger</keyword>
<reference key="1">
    <citation type="journal article" date="2000" name="Nature">
        <title>Sequence and analysis of chromosome 1 of the plant Arabidopsis thaliana.</title>
        <authorList>
            <person name="Theologis A."/>
            <person name="Ecker J.R."/>
            <person name="Palm C.J."/>
            <person name="Federspiel N.A."/>
            <person name="Kaul S."/>
            <person name="White O."/>
            <person name="Alonso J."/>
            <person name="Altafi H."/>
            <person name="Araujo R."/>
            <person name="Bowman C.L."/>
            <person name="Brooks S.Y."/>
            <person name="Buehler E."/>
            <person name="Chan A."/>
            <person name="Chao Q."/>
            <person name="Chen H."/>
            <person name="Cheuk R.F."/>
            <person name="Chin C.W."/>
            <person name="Chung M.K."/>
            <person name="Conn L."/>
            <person name="Conway A.B."/>
            <person name="Conway A.R."/>
            <person name="Creasy T.H."/>
            <person name="Dewar K."/>
            <person name="Dunn P."/>
            <person name="Etgu P."/>
            <person name="Feldblyum T.V."/>
            <person name="Feng J.-D."/>
            <person name="Fong B."/>
            <person name="Fujii C.Y."/>
            <person name="Gill J.E."/>
            <person name="Goldsmith A.D."/>
            <person name="Haas B."/>
            <person name="Hansen N.F."/>
            <person name="Hughes B."/>
            <person name="Huizar L."/>
            <person name="Hunter J.L."/>
            <person name="Jenkins J."/>
            <person name="Johnson-Hopson C."/>
            <person name="Khan S."/>
            <person name="Khaykin E."/>
            <person name="Kim C.J."/>
            <person name="Koo H.L."/>
            <person name="Kremenetskaia I."/>
            <person name="Kurtz D.B."/>
            <person name="Kwan A."/>
            <person name="Lam B."/>
            <person name="Langin-Hooper S."/>
            <person name="Lee A."/>
            <person name="Lee J.M."/>
            <person name="Lenz C.A."/>
            <person name="Li J.H."/>
            <person name="Li Y.-P."/>
            <person name="Lin X."/>
            <person name="Liu S.X."/>
            <person name="Liu Z.A."/>
            <person name="Luros J.S."/>
            <person name="Maiti R."/>
            <person name="Marziali A."/>
            <person name="Militscher J."/>
            <person name="Miranda M."/>
            <person name="Nguyen M."/>
            <person name="Nierman W.C."/>
            <person name="Osborne B.I."/>
            <person name="Pai G."/>
            <person name="Peterson J."/>
            <person name="Pham P.K."/>
            <person name="Rizzo M."/>
            <person name="Rooney T."/>
            <person name="Rowley D."/>
            <person name="Sakano H."/>
            <person name="Salzberg S.L."/>
            <person name="Schwartz J.R."/>
            <person name="Shinn P."/>
            <person name="Southwick A.M."/>
            <person name="Sun H."/>
            <person name="Tallon L.J."/>
            <person name="Tambunga G."/>
            <person name="Toriumi M.J."/>
            <person name="Town C.D."/>
            <person name="Utterback T."/>
            <person name="Van Aken S."/>
            <person name="Vaysberg M."/>
            <person name="Vysotskaia V.S."/>
            <person name="Walker M."/>
            <person name="Wu D."/>
            <person name="Yu G."/>
            <person name="Fraser C.M."/>
            <person name="Venter J.C."/>
            <person name="Davis R.W."/>
        </authorList>
    </citation>
    <scope>NUCLEOTIDE SEQUENCE [LARGE SCALE GENOMIC DNA]</scope>
    <source>
        <strain>cv. Columbia</strain>
    </source>
</reference>
<reference key="2">
    <citation type="journal article" date="2017" name="Plant J.">
        <title>Araport11: a complete reannotation of the Arabidopsis thaliana reference genome.</title>
        <authorList>
            <person name="Cheng C.Y."/>
            <person name="Krishnakumar V."/>
            <person name="Chan A.P."/>
            <person name="Thibaud-Nissen F."/>
            <person name="Schobel S."/>
            <person name="Town C.D."/>
        </authorList>
    </citation>
    <scope>GENOME REANNOTATION</scope>
    <source>
        <strain>cv. Columbia</strain>
    </source>
</reference>
<reference key="3">
    <citation type="submission" date="2006-03" db="EMBL/GenBank/DDBJ databases">
        <authorList>
            <person name="Underwood B.A."/>
            <person name="Xiao Y.-L."/>
            <person name="Moskal W.A. Jr."/>
            <person name="Monaghan E.L."/>
            <person name="Wang W."/>
            <person name="Redman J.C."/>
            <person name="Wu H.C."/>
            <person name="Utterback T."/>
            <person name="Town C.D."/>
        </authorList>
    </citation>
    <scope>NUCLEOTIDE SEQUENCE [LARGE SCALE MRNA] (ISOFORM 2)</scope>
    <source>
        <strain>cv. Columbia</strain>
    </source>
</reference>
<name>SINL1_ARATH</name>
<evidence type="ECO:0000250" key="1"/>
<evidence type="ECO:0000255" key="2">
    <source>
        <dbReference type="PROSITE-ProRule" id="PRU00455"/>
    </source>
</evidence>
<evidence type="ECO:0000256" key="3">
    <source>
        <dbReference type="SAM" id="MobiDB-lite"/>
    </source>
</evidence>
<evidence type="ECO:0000303" key="4">
    <source ref="3"/>
</evidence>
<evidence type="ECO:0000305" key="5"/>
<accession>Q9C6H4</accession>
<accession>Q1PFG0</accession>
<feature type="chain" id="PRO_0000299190" description="E3 ubiquitin-protein ligase SINA-like 1">
    <location>
        <begin position="1"/>
        <end position="366"/>
    </location>
</feature>
<feature type="zinc finger region" description="RING-type; degenerate">
    <location>
        <begin position="56"/>
        <end position="92"/>
    </location>
</feature>
<feature type="zinc finger region" description="SIAH-type; degenerate" evidence="2">
    <location>
        <begin position="109"/>
        <end position="232"/>
    </location>
</feature>
<feature type="region of interest" description="Disordered" evidence="3">
    <location>
        <begin position="1"/>
        <end position="37"/>
    </location>
</feature>
<feature type="region of interest" description="SBD" evidence="1">
    <location>
        <begin position="106"/>
        <end position="354"/>
    </location>
</feature>
<feature type="binding site" evidence="1">
    <location>
        <position position="114"/>
    </location>
    <ligand>
        <name>Zn(2+)</name>
        <dbReference type="ChEBI" id="CHEBI:29105"/>
        <label>1</label>
    </ligand>
</feature>
<feature type="binding site" evidence="1">
    <location>
        <position position="186"/>
    </location>
    <ligand>
        <name>Zn(2+)</name>
        <dbReference type="ChEBI" id="CHEBI:29105"/>
        <label>1</label>
    </ligand>
</feature>
<feature type="binding site" evidence="1">
    <location>
        <position position="198"/>
    </location>
    <ligand>
        <name>Zn(2+)</name>
        <dbReference type="ChEBI" id="CHEBI:29105"/>
        <label>1</label>
    </ligand>
</feature>
<feature type="binding site" evidence="1">
    <location>
        <position position="202"/>
    </location>
    <ligand>
        <name>Zn(2+)</name>
        <dbReference type="ChEBI" id="CHEBI:29105"/>
        <label>1</label>
    </ligand>
</feature>
<feature type="binding site" evidence="1">
    <location>
        <position position="209"/>
    </location>
    <ligand>
        <name>Zn(2+)</name>
        <dbReference type="ChEBI" id="CHEBI:29105"/>
        <label>2</label>
    </ligand>
</feature>
<feature type="binding site" evidence="1">
    <location>
        <position position="214"/>
    </location>
    <ligand>
        <name>Zn(2+)</name>
        <dbReference type="ChEBI" id="CHEBI:29105"/>
        <label>2</label>
    </ligand>
</feature>
<feature type="binding site" evidence="1">
    <location>
        <position position="226"/>
    </location>
    <ligand>
        <name>Zn(2+)</name>
        <dbReference type="ChEBI" id="CHEBI:29105"/>
        <label>2</label>
    </ligand>
</feature>
<feature type="binding site" evidence="1">
    <location>
        <position position="231"/>
    </location>
    <ligand>
        <name>Zn(2+)</name>
        <dbReference type="ChEBI" id="CHEBI:29105"/>
        <label>2</label>
    </ligand>
</feature>
<feature type="splice variant" id="VSP_027589" description="In isoform 2." evidence="4">
    <original>QSLFLAKRQNGCTETFSYGNELVHEKKCSFALCYCPAPNCNYAGVYKDLYSHYAANHKKLWTR</original>
    <variation>CDNGHVACSSCCIELRYKCPSCSLPIGNYRCIIMEKVVKAIIVPCQTPKWLHRDILLWQRVSP</variation>
    <location>
        <begin position="175"/>
        <end position="237"/>
    </location>
</feature>
<feature type="splice variant" id="VSP_027590" description="In isoform 2." evidence="4">
    <location>
        <begin position="238"/>
        <end position="366"/>
    </location>
</feature>
<proteinExistence type="evidence at transcript level"/>
<protein>
    <recommendedName>
        <fullName>E3 ubiquitin-protein ligase SINA-like 1</fullName>
        <ecNumber>2.3.2.27</ecNumber>
    </recommendedName>
    <alternativeName>
        <fullName evidence="5">RING-type E3 ubiquitin transferase SINA-like 1</fullName>
    </alternativeName>
    <alternativeName>
        <fullName>Seven in absentia-like protein 1</fullName>
    </alternativeName>
</protein>
<dbReference type="EC" id="2.3.2.27"/>
<dbReference type="EMBL" id="AC079285">
    <property type="protein sequence ID" value="AAG51177.1"/>
    <property type="molecule type" value="Genomic_DNA"/>
</dbReference>
<dbReference type="EMBL" id="CP002684">
    <property type="protein sequence ID" value="AEE34535.1"/>
    <property type="molecule type" value="Genomic_DNA"/>
</dbReference>
<dbReference type="EMBL" id="CP002684">
    <property type="protein sequence ID" value="AEE34536.1"/>
    <property type="molecule type" value="Genomic_DNA"/>
</dbReference>
<dbReference type="EMBL" id="DQ446403">
    <property type="protein sequence ID" value="ABE65747.1"/>
    <property type="molecule type" value="mRNA"/>
</dbReference>
<dbReference type="PIR" id="A96692">
    <property type="entry name" value="A96692"/>
</dbReference>
<dbReference type="RefSeq" id="NP_001185331.1">
    <molecule id="Q9C6H4-2"/>
    <property type="nucleotide sequence ID" value="NM_001198402.1"/>
</dbReference>
<dbReference type="RefSeq" id="NP_176834.1">
    <molecule id="Q9C6H4-1"/>
    <property type="nucleotide sequence ID" value="NM_105332.1"/>
</dbReference>
<dbReference type="STRING" id="3702.Q9C6H4"/>
<dbReference type="iPTMnet" id="Q9C6H4"/>
<dbReference type="PaxDb" id="3702-AT1G66610.1"/>
<dbReference type="EnsemblPlants" id="AT1G66610.1">
    <molecule id="Q9C6H4-1"/>
    <property type="protein sequence ID" value="AT1G66610.1"/>
    <property type="gene ID" value="AT1G66610"/>
</dbReference>
<dbReference type="EnsemblPlants" id="AT1G66610.2">
    <molecule id="Q9C6H4-2"/>
    <property type="protein sequence ID" value="AT1G66610.2"/>
    <property type="gene ID" value="AT1G66610"/>
</dbReference>
<dbReference type="GeneID" id="842979"/>
<dbReference type="Gramene" id="AT1G66610.1">
    <molecule id="Q9C6H4-1"/>
    <property type="protein sequence ID" value="AT1G66610.1"/>
    <property type="gene ID" value="AT1G66610"/>
</dbReference>
<dbReference type="Gramene" id="AT1G66610.2">
    <molecule id="Q9C6H4-2"/>
    <property type="protein sequence ID" value="AT1G66610.2"/>
    <property type="gene ID" value="AT1G66610"/>
</dbReference>
<dbReference type="KEGG" id="ath:AT1G66610"/>
<dbReference type="Araport" id="AT1G66610"/>
<dbReference type="TAIR" id="AT1G66610"/>
<dbReference type="eggNOG" id="KOG3002">
    <property type="taxonomic scope" value="Eukaryota"/>
</dbReference>
<dbReference type="HOGENOM" id="CLU_040603_2_2_1"/>
<dbReference type="InParanoid" id="Q9C6H4"/>
<dbReference type="OMA" id="SLKMNIC"/>
<dbReference type="PhylomeDB" id="Q9C6H4"/>
<dbReference type="UniPathway" id="UPA00143"/>
<dbReference type="PRO" id="PR:Q9C6H4"/>
<dbReference type="Proteomes" id="UP000006548">
    <property type="component" value="Chromosome 1"/>
</dbReference>
<dbReference type="ExpressionAtlas" id="Q9C6H4">
    <property type="expression patterns" value="baseline and differential"/>
</dbReference>
<dbReference type="GO" id="GO:0016740">
    <property type="term" value="F:transferase activity"/>
    <property type="evidence" value="ECO:0007669"/>
    <property type="project" value="UniProtKB-KW"/>
</dbReference>
<dbReference type="GO" id="GO:0008270">
    <property type="term" value="F:zinc ion binding"/>
    <property type="evidence" value="ECO:0007669"/>
    <property type="project" value="UniProtKB-KW"/>
</dbReference>
<dbReference type="GO" id="GO:0016567">
    <property type="term" value="P:protein ubiquitination"/>
    <property type="evidence" value="ECO:0007669"/>
    <property type="project" value="UniProtKB-UniPathway"/>
</dbReference>
<dbReference type="CDD" id="cd16571">
    <property type="entry name" value="RING-HC_SIAHs"/>
    <property type="match status" value="1"/>
</dbReference>
<dbReference type="Gene3D" id="3.30.40.10">
    <property type="entry name" value="Zinc/RING finger domain, C3HC4 (zinc finger)"/>
    <property type="match status" value="2"/>
</dbReference>
<dbReference type="InterPro" id="IPR049548">
    <property type="entry name" value="Sina-like_RING"/>
</dbReference>
<dbReference type="InterPro" id="IPR044286">
    <property type="entry name" value="SINL_plant"/>
</dbReference>
<dbReference type="InterPro" id="IPR013083">
    <property type="entry name" value="Znf_RING/FYVE/PHD"/>
</dbReference>
<dbReference type="InterPro" id="IPR013010">
    <property type="entry name" value="Znf_SIAH"/>
</dbReference>
<dbReference type="PANTHER" id="PTHR46632:SF11">
    <property type="entry name" value="E3 UBIQUITIN-PROTEIN LIGASE SINA-LIKE 1-RELATED"/>
    <property type="match status" value="1"/>
</dbReference>
<dbReference type="PANTHER" id="PTHR46632">
    <property type="entry name" value="E3 UBIQUITIN-PROTEIN LIGASE SINA-LIKE 4"/>
    <property type="match status" value="1"/>
</dbReference>
<dbReference type="Pfam" id="PF21362">
    <property type="entry name" value="Sina_RING"/>
    <property type="match status" value="1"/>
</dbReference>
<dbReference type="Pfam" id="PF21361">
    <property type="entry name" value="Sina_ZnF"/>
    <property type="match status" value="1"/>
</dbReference>
<dbReference type="SUPFAM" id="SSF49599">
    <property type="entry name" value="TRAF domain-like"/>
    <property type="match status" value="1"/>
</dbReference>
<dbReference type="PROSITE" id="PS51081">
    <property type="entry name" value="ZF_SIAH"/>
    <property type="match status" value="1"/>
</dbReference>
<comment type="function">
    <text evidence="1">E3 ubiquitin-protein ligase that mediates ubiquitination and subsequent proteasomal degradation of target proteins. E3 ubiquitin ligases accept ubiquitin from an E2 ubiquitin-conjugating enzyme in the form of a thioester and then directly transfers the ubiquitin to targeted substrates. It probably triggers the ubiquitin-mediated degradation of different substrates.</text>
</comment>
<comment type="catalytic activity">
    <reaction>
        <text>S-ubiquitinyl-[E2 ubiquitin-conjugating enzyme]-L-cysteine + [acceptor protein]-L-lysine = [E2 ubiquitin-conjugating enzyme]-L-cysteine + N(6)-ubiquitinyl-[acceptor protein]-L-lysine.</text>
        <dbReference type="EC" id="2.3.2.27"/>
    </reaction>
</comment>
<comment type="pathway">
    <text>Protein modification; protein ubiquitination.</text>
</comment>
<comment type="alternative products">
    <event type="alternative splicing"/>
    <isoform>
        <id>Q9C6H4-1</id>
        <name>1</name>
        <sequence type="displayed"/>
    </isoform>
    <isoform>
        <id>Q9C6H4-2</id>
        <name>2</name>
        <sequence type="described" ref="VSP_027589 VSP_027590"/>
    </isoform>
</comment>
<comment type="domain">
    <text evidence="1">The RING-type zinc finger domain is essential for ubiquitin ligase activity.</text>
</comment>
<comment type="domain">
    <text evidence="1">The SBD domain (substrate-binding domain) mediates the homodimerization and the interaction with substrate proteins. It is related to the TRAF family.</text>
</comment>
<comment type="similarity">
    <text evidence="5">Belongs to the SINA (Seven in absentia) family.</text>
</comment>